<dbReference type="EMBL" id="AF001589">
    <property type="protein sequence ID" value="AAB91379.1"/>
    <property type="molecule type" value="Genomic_DNA"/>
</dbReference>
<dbReference type="GO" id="GO:0000786">
    <property type="term" value="C:nucleosome"/>
    <property type="evidence" value="ECO:0007669"/>
    <property type="project" value="UniProtKB-KW"/>
</dbReference>
<dbReference type="GO" id="GO:0005634">
    <property type="term" value="C:nucleus"/>
    <property type="evidence" value="ECO:0007669"/>
    <property type="project" value="UniProtKB-SubCell"/>
</dbReference>
<dbReference type="GO" id="GO:0003677">
    <property type="term" value="F:DNA binding"/>
    <property type="evidence" value="ECO:0007669"/>
    <property type="project" value="UniProtKB-KW"/>
</dbReference>
<dbReference type="GO" id="GO:0030261">
    <property type="term" value="P:chromosome condensation"/>
    <property type="evidence" value="ECO:0007669"/>
    <property type="project" value="UniProtKB-KW"/>
</dbReference>
<dbReference type="GO" id="GO:0035092">
    <property type="term" value="P:sperm DNA condensation"/>
    <property type="evidence" value="ECO:0007669"/>
    <property type="project" value="InterPro"/>
</dbReference>
<dbReference type="InterPro" id="IPR000221">
    <property type="entry name" value="Protamine_P1"/>
</dbReference>
<dbReference type="PROSITE" id="PS00048">
    <property type="entry name" value="PROTAMINE_P1"/>
    <property type="match status" value="1"/>
</dbReference>
<accession>Q71VP6</accession>
<feature type="chain" id="PRO_0000191512" description="Sperm protamine P1">
    <location>
        <begin position="1"/>
        <end position="63"/>
    </location>
</feature>
<feature type="region of interest" description="Disordered" evidence="2">
    <location>
        <begin position="1"/>
        <end position="63"/>
    </location>
</feature>
<organism>
    <name type="scientific">Ningaui yvonnae</name>
    <name type="common">Southern ningaui</name>
    <dbReference type="NCBI Taxonomy" id="32554"/>
    <lineage>
        <taxon>Eukaryota</taxon>
        <taxon>Metazoa</taxon>
        <taxon>Chordata</taxon>
        <taxon>Craniata</taxon>
        <taxon>Vertebrata</taxon>
        <taxon>Euteleostomi</taxon>
        <taxon>Mammalia</taxon>
        <taxon>Metatheria</taxon>
        <taxon>Dasyuromorphia</taxon>
        <taxon>Dasyuridae</taxon>
        <taxon>Ningaui</taxon>
    </lineage>
</organism>
<comment type="function">
    <text evidence="1">Protamines substitute for histones in the chromatin of sperm during the haploid phase of spermatogenesis. They compact sperm DNA into a highly condensed, stable and inactive complex (By similarity).</text>
</comment>
<comment type="subcellular location">
    <subcellularLocation>
        <location evidence="1">Nucleus</location>
    </subcellularLocation>
    <subcellularLocation>
        <location evidence="1">Chromosome</location>
    </subcellularLocation>
</comment>
<comment type="tissue specificity">
    <text>Testis.</text>
</comment>
<comment type="similarity">
    <text evidence="3">Belongs to the protamine P1 family.</text>
</comment>
<sequence>MARYRRHSRSRSRSRYRRRRRRRSRHHNRRRTYRRSRRHSRRRRGRRRGYSRRRYSRRGRRRY</sequence>
<proteinExistence type="evidence at transcript level"/>
<reference key="1">
    <citation type="journal article" date="1997" name="Mol. Phylogenet. Evol.">
        <title>A multigene assessment of phylogenetic relationships within the dasyurid marsupial subfamily Sminthopsinae.</title>
        <authorList>
            <person name="Krajewski C."/>
            <person name="Blacket M."/>
            <person name="Buckley L."/>
            <person name="Westerman M."/>
        </authorList>
    </citation>
    <scope>NUCLEOTIDE SEQUENCE [GENOMIC DNA]</scope>
</reference>
<evidence type="ECO:0000250" key="1"/>
<evidence type="ECO:0000256" key="2">
    <source>
        <dbReference type="SAM" id="MobiDB-lite"/>
    </source>
</evidence>
<evidence type="ECO:0000305" key="3"/>
<keyword id="KW-0158">Chromosome</keyword>
<keyword id="KW-0217">Developmental protein</keyword>
<keyword id="KW-0221">Differentiation</keyword>
<keyword id="KW-0226">DNA condensation</keyword>
<keyword id="KW-0238">DNA-binding</keyword>
<keyword id="KW-0544">Nucleosome core</keyword>
<keyword id="KW-0539">Nucleus</keyword>
<keyword id="KW-0744">Spermatogenesis</keyword>
<name>HSP1_NINYV</name>
<protein>
    <recommendedName>
        <fullName>Sperm protamine P1</fullName>
    </recommendedName>
</protein>
<gene>
    <name type="primary">PRM1</name>
</gene>